<accession>G3V7R4</accession>
<organism>
    <name type="scientific">Rattus norvegicus</name>
    <name type="common">Rat</name>
    <dbReference type="NCBI Taxonomy" id="10116"/>
    <lineage>
        <taxon>Eukaryota</taxon>
        <taxon>Metazoa</taxon>
        <taxon>Chordata</taxon>
        <taxon>Craniata</taxon>
        <taxon>Vertebrata</taxon>
        <taxon>Euteleostomi</taxon>
        <taxon>Mammalia</taxon>
        <taxon>Eutheria</taxon>
        <taxon>Euarchontoglires</taxon>
        <taxon>Glires</taxon>
        <taxon>Rodentia</taxon>
        <taxon>Myomorpha</taxon>
        <taxon>Muroidea</taxon>
        <taxon>Muridae</taxon>
        <taxon>Murinae</taxon>
        <taxon>Rattus</taxon>
    </lineage>
</organism>
<sequence>MAEAPQVVETDPDFEPLPRQRSCTWPLPRPEFNQSNSTTSSPAPSGSTAANPDATASLASASAVSTDFMSNLSLLEESEDFARAPGCVAVAAAAAASRGLCGDFQGPEAGCVHSAPPQPPPTGPLSQPPPVPPAAAGPLAGQPRKTSSSRRNAWGNLSYADLITKAIESSAEKRLTLSQIYEWMVKSVPYFKDKGDSNSSAGWKNSIRHNLSLHSKFIRVQNEGTGKSSWWMLNPEGGKSGKSPRRRAASMDNNSKFAKSRGRAAKKKASLQSGQEGPGDSPGSQFSKWPASPGSHSNDDFDNWSTFRPRTSSNASTISGRLSPIMTEQDDLGDGDVHSLVYPPSAAKMASTLPSLSEISNPENMENLLDNLNLLSSPTSLTVSTQSSPGSMMQQTPCYSFAPPNTSLNSPSPNYAKYTYGQSSMSPVPQMPMQTLQDSKSSYGGLNQYNCAPGLLKELLTSDSPPHNDIMSPVDPGVAQPNSRVLGQNVLMGPNSVMPAYGSQAPHNKMMNPSSHTHPGHAQQTSSVNGRALPHVVNTMPHTSAMNRLTPVKTPLQVPLSHPMQMSALGNYSSVSSCNGYGRMGVLHQEKLPSDLDGMFIERLDCDMESIIRNDLMDGDTLDFNFDNVLPNQSFPHSVKTTTHSWVSG</sequence>
<feature type="chain" id="PRO_0000419245" description="Forkhead box protein O1">
    <location>
        <begin position="1"/>
        <end position="649"/>
    </location>
</feature>
<feature type="DNA-binding region" description="Fork-head" evidence="4">
    <location>
        <begin position="154"/>
        <end position="248"/>
    </location>
</feature>
<feature type="region of interest" description="Disordered" evidence="5">
    <location>
        <begin position="1"/>
        <end position="62"/>
    </location>
</feature>
<feature type="region of interest" description="Disordered" evidence="5">
    <location>
        <begin position="112"/>
        <end position="151"/>
    </location>
</feature>
<feature type="region of interest" description="DNA-binding" evidence="2">
    <location>
        <begin position="205"/>
        <end position="212"/>
    </location>
</feature>
<feature type="region of interest" description="Disordered" evidence="5">
    <location>
        <begin position="228"/>
        <end position="339"/>
    </location>
</feature>
<feature type="region of interest" description="DNA-binding" evidence="2">
    <location>
        <begin position="228"/>
        <end position="231"/>
    </location>
</feature>
<feature type="region of interest" description="Sufficient for interaction with NLK" evidence="3">
    <location>
        <begin position="277"/>
        <end position="557"/>
    </location>
</feature>
<feature type="region of interest" description="Required for interaction with RUNX2" evidence="3">
    <location>
        <begin position="357"/>
        <end position="453"/>
    </location>
</feature>
<feature type="short sequence motif" description="Nuclear localization signal" evidence="1">
    <location>
        <begin position="245"/>
        <end position="247"/>
    </location>
</feature>
<feature type="short sequence motif" description="Required for interaction with SIRT1" evidence="3">
    <location>
        <begin position="456"/>
        <end position="460"/>
    </location>
</feature>
<feature type="compositionally biased region" description="Low complexity" evidence="5">
    <location>
        <begin position="33"/>
        <end position="62"/>
    </location>
</feature>
<feature type="compositionally biased region" description="Pro residues" evidence="5">
    <location>
        <begin position="116"/>
        <end position="135"/>
    </location>
</feature>
<feature type="compositionally biased region" description="Basic residues" evidence="5">
    <location>
        <begin position="258"/>
        <end position="269"/>
    </location>
</feature>
<feature type="compositionally biased region" description="Polar residues" evidence="5">
    <location>
        <begin position="303"/>
        <end position="320"/>
    </location>
</feature>
<feature type="site" description="DNA-binding" evidence="2">
    <location>
        <position position="152"/>
    </location>
</feature>
<feature type="site" description="DNA-binding" evidence="2">
    <location>
        <position position="159"/>
    </location>
</feature>
<feature type="site" description="DNA-binding" evidence="2">
    <location>
        <position position="219"/>
    </location>
</feature>
<feature type="modified residue" description="Phosphothreonine; by PKB/AKT1 or PKB/AKT2 and SGK1" evidence="2">
    <location>
        <position position="24"/>
    </location>
</feature>
<feature type="modified residue" description="Phosphoserine; by STK4/MST1" evidence="2">
    <location>
        <position position="206"/>
    </location>
</feature>
<feature type="modified residue" description="Phosphoserine" evidence="2">
    <location>
        <position position="212"/>
    </location>
</feature>
<feature type="modified residue" description="Phosphoserine" evidence="2">
    <location>
        <position position="228"/>
    </location>
</feature>
<feature type="modified residue" description="Phosphoserine" evidence="2">
    <location>
        <position position="229"/>
    </location>
</feature>
<feature type="modified residue" description="N6-acetyllysine" evidence="3">
    <location>
        <position position="239"/>
    </location>
</feature>
<feature type="modified residue" description="N6-acetyllysine" evidence="3">
    <location>
        <position position="242"/>
    </location>
</feature>
<feature type="modified residue" description="Phosphoserine; by CDK1" evidence="2">
    <location>
        <position position="243"/>
    </location>
</feature>
<feature type="modified residue" description="Omega-N-methylarginine; by PRMT1" evidence="3">
    <location>
        <position position="245"/>
    </location>
</feature>
<feature type="modified residue" description="Omega-N-methylarginine; by PRMT1" evidence="3">
    <location>
        <position position="247"/>
    </location>
</feature>
<feature type="modified residue" description="Phosphoserine; by PKB/AKT1 and SGK1" evidence="6">
    <location>
        <position position="250"/>
    </location>
</feature>
<feature type="modified residue" description="N6-acetyllysine" evidence="2">
    <location>
        <position position="256"/>
    </location>
</feature>
<feature type="modified residue" description="N6-acetyllysine" evidence="2">
    <location>
        <position position="259"/>
    </location>
</feature>
<feature type="modified residue" description="N6-acetyllysine" evidence="2">
    <location>
        <position position="268"/>
    </location>
</feature>
<feature type="modified residue" description="Phosphoserine" evidence="8">
    <location>
        <position position="281"/>
    </location>
</feature>
<feature type="modified residue" description="Phosphoserine" evidence="3">
    <location>
        <position position="292"/>
    </location>
</feature>
<feature type="modified residue" description="Phosphoserine; by PKB/AKT1" evidence="3">
    <location>
        <position position="313"/>
    </location>
</feature>
<feature type="modified residue" description="Phosphoserine; by CK1 and SGK1" evidence="2">
    <location>
        <position position="316"/>
    </location>
</feature>
<feature type="modified residue" description="Phosphoserine; by CK1" evidence="2">
    <location>
        <position position="319"/>
    </location>
</feature>
<feature type="modified residue" description="Phosphoserine" evidence="8">
    <location>
        <position position="323"/>
    </location>
</feature>
<feature type="modified residue" description="Phosphothreonine" evidence="3">
    <location>
        <position position="327"/>
    </location>
</feature>
<feature type="modified residue" description="N6-acetyllysine" evidence="2">
    <location>
        <position position="417"/>
    </location>
</feature>
<protein>
    <recommendedName>
        <fullName>Forkhead box protein O1</fullName>
    </recommendedName>
    <alternativeName>
        <fullName>Forkhead box protein O1A</fullName>
    </alternativeName>
    <alternativeName>
        <fullName>Forkhead in rhabdomyosarcoma</fullName>
    </alternativeName>
</protein>
<reference key="1">
    <citation type="journal article" date="2004" name="Nature">
        <title>Genome sequence of the Brown Norway rat yields insights into mammalian evolution.</title>
        <authorList>
            <person name="Gibbs R.A."/>
            <person name="Weinstock G.M."/>
            <person name="Metzker M.L."/>
            <person name="Muzny D.M."/>
            <person name="Sodergren E.J."/>
            <person name="Scherer S."/>
            <person name="Scott G."/>
            <person name="Steffen D."/>
            <person name="Worley K.C."/>
            <person name="Burch P.E."/>
            <person name="Okwuonu G."/>
            <person name="Hines S."/>
            <person name="Lewis L."/>
            <person name="Deramo C."/>
            <person name="Delgado O."/>
            <person name="Dugan-Rocha S."/>
            <person name="Miner G."/>
            <person name="Morgan M."/>
            <person name="Hawes A."/>
            <person name="Gill R."/>
            <person name="Holt R.A."/>
            <person name="Adams M.D."/>
            <person name="Amanatides P.G."/>
            <person name="Baden-Tillson H."/>
            <person name="Barnstead M."/>
            <person name="Chin S."/>
            <person name="Evans C.A."/>
            <person name="Ferriera S."/>
            <person name="Fosler C."/>
            <person name="Glodek A."/>
            <person name="Gu Z."/>
            <person name="Jennings D."/>
            <person name="Kraft C.L."/>
            <person name="Nguyen T."/>
            <person name="Pfannkoch C.M."/>
            <person name="Sitter C."/>
            <person name="Sutton G.G."/>
            <person name="Venter J.C."/>
            <person name="Woodage T."/>
            <person name="Smith D."/>
            <person name="Lee H.-M."/>
            <person name="Gustafson E."/>
            <person name="Cahill P."/>
            <person name="Kana A."/>
            <person name="Doucette-Stamm L."/>
            <person name="Weinstock K."/>
            <person name="Fechtel K."/>
            <person name="Weiss R.B."/>
            <person name="Dunn D.M."/>
            <person name="Green E.D."/>
            <person name="Blakesley R.W."/>
            <person name="Bouffard G.G."/>
            <person name="De Jong P.J."/>
            <person name="Osoegawa K."/>
            <person name="Zhu B."/>
            <person name="Marra M."/>
            <person name="Schein J."/>
            <person name="Bosdet I."/>
            <person name="Fjell C."/>
            <person name="Jones S."/>
            <person name="Krzywinski M."/>
            <person name="Mathewson C."/>
            <person name="Siddiqui A."/>
            <person name="Wye N."/>
            <person name="McPherson J."/>
            <person name="Zhao S."/>
            <person name="Fraser C.M."/>
            <person name="Shetty J."/>
            <person name="Shatsman S."/>
            <person name="Geer K."/>
            <person name="Chen Y."/>
            <person name="Abramzon S."/>
            <person name="Nierman W.C."/>
            <person name="Havlak P.H."/>
            <person name="Chen R."/>
            <person name="Durbin K.J."/>
            <person name="Egan A."/>
            <person name="Ren Y."/>
            <person name="Song X.-Z."/>
            <person name="Li B."/>
            <person name="Liu Y."/>
            <person name="Qin X."/>
            <person name="Cawley S."/>
            <person name="Cooney A.J."/>
            <person name="D'Souza L.M."/>
            <person name="Martin K."/>
            <person name="Wu J.Q."/>
            <person name="Gonzalez-Garay M.L."/>
            <person name="Jackson A.R."/>
            <person name="Kalafus K.J."/>
            <person name="McLeod M.P."/>
            <person name="Milosavljevic A."/>
            <person name="Virk D."/>
            <person name="Volkov A."/>
            <person name="Wheeler D.A."/>
            <person name="Zhang Z."/>
            <person name="Bailey J.A."/>
            <person name="Eichler E.E."/>
            <person name="Tuzun E."/>
            <person name="Birney E."/>
            <person name="Mongin E."/>
            <person name="Ureta-Vidal A."/>
            <person name="Woodwark C."/>
            <person name="Zdobnov E."/>
            <person name="Bork P."/>
            <person name="Suyama M."/>
            <person name="Torrents D."/>
            <person name="Alexandersson M."/>
            <person name="Trask B.J."/>
            <person name="Young J.M."/>
            <person name="Huang H."/>
            <person name="Wang H."/>
            <person name="Xing H."/>
            <person name="Daniels S."/>
            <person name="Gietzen D."/>
            <person name="Schmidt J."/>
            <person name="Stevens K."/>
            <person name="Vitt U."/>
            <person name="Wingrove J."/>
            <person name="Camara F."/>
            <person name="Mar Alba M."/>
            <person name="Abril J.F."/>
            <person name="Guigo R."/>
            <person name="Smit A."/>
            <person name="Dubchak I."/>
            <person name="Rubin E.M."/>
            <person name="Couronne O."/>
            <person name="Poliakov A."/>
            <person name="Huebner N."/>
            <person name="Ganten D."/>
            <person name="Goesele C."/>
            <person name="Hummel O."/>
            <person name="Kreitler T."/>
            <person name="Lee Y.-A."/>
            <person name="Monti J."/>
            <person name="Schulz H."/>
            <person name="Zimdahl H."/>
            <person name="Himmelbauer H."/>
            <person name="Lehrach H."/>
            <person name="Jacob H.J."/>
            <person name="Bromberg S."/>
            <person name="Gullings-Handley J."/>
            <person name="Jensen-Seaman M.I."/>
            <person name="Kwitek A.E."/>
            <person name="Lazar J."/>
            <person name="Pasko D."/>
            <person name="Tonellato P.J."/>
            <person name="Twigger S."/>
            <person name="Ponting C.P."/>
            <person name="Duarte J.M."/>
            <person name="Rice S."/>
            <person name="Goodstadt L."/>
            <person name="Beatson S.A."/>
            <person name="Emes R.D."/>
            <person name="Winter E.E."/>
            <person name="Webber C."/>
            <person name="Brandt P."/>
            <person name="Nyakatura G."/>
            <person name="Adetobi M."/>
            <person name="Chiaromonte F."/>
            <person name="Elnitski L."/>
            <person name="Eswara P."/>
            <person name="Hardison R.C."/>
            <person name="Hou M."/>
            <person name="Kolbe D."/>
            <person name="Makova K."/>
            <person name="Miller W."/>
            <person name="Nekrutenko A."/>
            <person name="Riemer C."/>
            <person name="Schwartz S."/>
            <person name="Taylor J."/>
            <person name="Yang S."/>
            <person name="Zhang Y."/>
            <person name="Lindpaintner K."/>
            <person name="Andrews T.D."/>
            <person name="Caccamo M."/>
            <person name="Clamp M."/>
            <person name="Clarke L."/>
            <person name="Curwen V."/>
            <person name="Durbin R.M."/>
            <person name="Eyras E."/>
            <person name="Searle S.M."/>
            <person name="Cooper G.M."/>
            <person name="Batzoglou S."/>
            <person name="Brudno M."/>
            <person name="Sidow A."/>
            <person name="Stone E.A."/>
            <person name="Payseur B.A."/>
            <person name="Bourque G."/>
            <person name="Lopez-Otin C."/>
            <person name="Puente X.S."/>
            <person name="Chakrabarti K."/>
            <person name="Chatterji S."/>
            <person name="Dewey C."/>
            <person name="Pachter L."/>
            <person name="Bray N."/>
            <person name="Yap V.B."/>
            <person name="Caspi A."/>
            <person name="Tesler G."/>
            <person name="Pevzner P.A."/>
            <person name="Haussler D."/>
            <person name="Roskin K.M."/>
            <person name="Baertsch R."/>
            <person name="Clawson H."/>
            <person name="Furey T.S."/>
            <person name="Hinrichs A.S."/>
            <person name="Karolchik D."/>
            <person name="Kent W.J."/>
            <person name="Rosenbloom K.R."/>
            <person name="Trumbower H."/>
            <person name="Weirauch M."/>
            <person name="Cooper D.N."/>
            <person name="Stenson P.D."/>
            <person name="Ma B."/>
            <person name="Brent M."/>
            <person name="Arumugam M."/>
            <person name="Shteynberg D."/>
            <person name="Copley R.R."/>
            <person name="Taylor M.S."/>
            <person name="Riethman H."/>
            <person name="Mudunuri U."/>
            <person name="Peterson J."/>
            <person name="Guyer M."/>
            <person name="Felsenfeld A."/>
            <person name="Old S."/>
            <person name="Mockrin S."/>
            <person name="Collins F.S."/>
        </authorList>
    </citation>
    <scope>NUCLEOTIDE SEQUENCE [LARGE SCALE GENOMIC DNA]</scope>
    <source>
        <strain>Brown Norway</strain>
    </source>
</reference>
<reference key="2">
    <citation type="submission" date="2005-09" db="EMBL/GenBank/DDBJ databases">
        <authorList>
            <person name="Mural R.J."/>
            <person name="Adams M.D."/>
            <person name="Myers E.W."/>
            <person name="Smith H.O."/>
            <person name="Venter J.C."/>
        </authorList>
    </citation>
    <scope>NUCLEOTIDE SEQUENCE [LARGE SCALE GENOMIC DNA]</scope>
    <source>
        <strain>Brown Norway</strain>
    </source>
</reference>
<reference key="3">
    <citation type="journal article" date="2009" name="J. Biol. Chem.">
        <title>C terminus of Hsc70-interacting protein promotes smooth muscle cell proliferation and survival through ubiquitin-mediated degradation of FoxO1.</title>
        <authorList>
            <person name="Li F."/>
            <person name="Xie P."/>
            <person name="Fan Y."/>
            <person name="Zhang H."/>
            <person name="Zheng L."/>
            <person name="Gu D."/>
            <person name="Patterson C."/>
            <person name="Li H."/>
        </authorList>
    </citation>
    <scope>FUNCTION</scope>
    <scope>SUBCELLULAR LOCATION</scope>
    <scope>TISSUE SPECIFICITY</scope>
    <scope>DEVELOPMENTAL STAGE</scope>
    <scope>INDUCTION BY BLOOD FLOW CESSATION INJURY</scope>
    <scope>PHOSPHORYLATION AT SER-250</scope>
</reference>
<reference key="4">
    <citation type="journal article" date="2012" name="Nat. Commun.">
        <title>Quantitative maps of protein phosphorylation sites across 14 different rat organs and tissues.</title>
        <authorList>
            <person name="Lundby A."/>
            <person name="Secher A."/>
            <person name="Lage K."/>
            <person name="Nordsborg N.B."/>
            <person name="Dmytriyev A."/>
            <person name="Lundby C."/>
            <person name="Olsen J.V."/>
        </authorList>
    </citation>
    <scope>PHOSPHORYLATION [LARGE SCALE ANALYSIS] AT SER-281 AND SER-323</scope>
    <scope>IDENTIFICATION BY MASS SPECTROMETRY [LARGE SCALE ANALYSIS]</scope>
</reference>
<reference key="5">
    <citation type="journal article" date="2015" name="J. Clin. Invest.">
        <title>Cardiomyocyte-enriched protein CIP protects against pathophysiological stresses and regulates cardiac homeostasis.</title>
        <authorList>
            <person name="Huang Z.P."/>
            <person name="Kataoka M."/>
            <person name="Chen J."/>
            <person name="Wu G."/>
            <person name="Ding J."/>
            <person name="Nie M."/>
            <person name="Lin Z."/>
            <person name="Liu J."/>
            <person name="Hu X."/>
            <person name="Ma L."/>
            <person name="Zhou B."/>
            <person name="Wakimoto H."/>
            <person name="Zeng C."/>
            <person name="Kyselovic J."/>
            <person name="Deng Z.L."/>
            <person name="Seidman C.E."/>
            <person name="Seidman J.G."/>
            <person name="Pu W.T."/>
            <person name="Wang D.Z."/>
        </authorList>
    </citation>
    <scope>FUNCTION</scope>
</reference>
<dbReference type="EMBL" id="CH474003">
    <property type="protein sequence ID" value="EDM14970.1"/>
    <property type="molecule type" value="Genomic_DNA"/>
</dbReference>
<dbReference type="RefSeq" id="NP_001178775.1">
    <property type="nucleotide sequence ID" value="NM_001191846.3"/>
</dbReference>
<dbReference type="SMR" id="G3V7R4"/>
<dbReference type="BioGRID" id="249982">
    <property type="interactions" value="3"/>
</dbReference>
<dbReference type="FunCoup" id="G3V7R4">
    <property type="interactions" value="1141"/>
</dbReference>
<dbReference type="STRING" id="10116.ENSRNOP00000018244"/>
<dbReference type="GlyGen" id="G3V7R4">
    <property type="glycosylation" value="1 site, 1 O-linked glycan (1 site)"/>
</dbReference>
<dbReference type="iPTMnet" id="G3V7R4"/>
<dbReference type="PhosphoSitePlus" id="G3V7R4"/>
<dbReference type="PaxDb" id="10116-ENSRNOP00000018244"/>
<dbReference type="Ensembl" id="ENSRNOT00000018244.6">
    <property type="protein sequence ID" value="ENSRNOP00000018244.3"/>
    <property type="gene ID" value="ENSRNOG00000013397.6"/>
</dbReference>
<dbReference type="GeneID" id="84482"/>
<dbReference type="KEGG" id="rno:84482"/>
<dbReference type="AGR" id="RGD:620283"/>
<dbReference type="CTD" id="2308"/>
<dbReference type="RGD" id="620283">
    <property type="gene designation" value="Foxo1"/>
</dbReference>
<dbReference type="eggNOG" id="KOG2294">
    <property type="taxonomic scope" value="Eukaryota"/>
</dbReference>
<dbReference type="GeneTree" id="ENSGT00940000161558"/>
<dbReference type="HOGENOM" id="CLU_023456_1_1_1"/>
<dbReference type="InParanoid" id="G3V7R4"/>
<dbReference type="OMA" id="NCVHQQA"/>
<dbReference type="OrthoDB" id="5954824at2759"/>
<dbReference type="TreeFam" id="TF315583"/>
<dbReference type="Reactome" id="R-RNO-198693">
    <property type="pathway name" value="AKT phosphorylates targets in the nucleus"/>
</dbReference>
<dbReference type="Reactome" id="R-RNO-211163">
    <property type="pathway name" value="AKT-mediated inactivation of FOXO1A"/>
</dbReference>
<dbReference type="Reactome" id="R-RNO-5687128">
    <property type="pathway name" value="MAPK6/MAPK4 signaling"/>
</dbReference>
<dbReference type="Reactome" id="R-RNO-9614399">
    <property type="pathway name" value="Regulation of localization of FOXO transcription factors"/>
</dbReference>
<dbReference type="Reactome" id="R-RNO-9617629">
    <property type="pathway name" value="Regulation of FOXO transcriptional activity by acetylation"/>
</dbReference>
<dbReference type="Reactome" id="R-RNO-9617828">
    <property type="pathway name" value="FOXO-mediated transcription of cell cycle genes"/>
</dbReference>
<dbReference type="PRO" id="PR:G3V7R4"/>
<dbReference type="Proteomes" id="UP000002494">
    <property type="component" value="Chromosome 2"/>
</dbReference>
<dbReference type="Proteomes" id="UP000234681">
    <property type="component" value="Chromosome 2"/>
</dbReference>
<dbReference type="Bgee" id="ENSRNOG00000013397">
    <property type="expression patterns" value="Expressed in ovary and 19 other cell types or tissues"/>
</dbReference>
<dbReference type="GO" id="GO:0005737">
    <property type="term" value="C:cytoplasm"/>
    <property type="evidence" value="ECO:0000314"/>
    <property type="project" value="UniProtKB"/>
</dbReference>
<dbReference type="GO" id="GO:0005654">
    <property type="term" value="C:nucleoplasm"/>
    <property type="evidence" value="ECO:0000304"/>
    <property type="project" value="Reactome"/>
</dbReference>
<dbReference type="GO" id="GO:0005634">
    <property type="term" value="C:nucleus"/>
    <property type="evidence" value="ECO:0000314"/>
    <property type="project" value="RGD"/>
</dbReference>
<dbReference type="GO" id="GO:0008013">
    <property type="term" value="F:beta-catenin binding"/>
    <property type="evidence" value="ECO:0000266"/>
    <property type="project" value="RGD"/>
</dbReference>
<dbReference type="GO" id="GO:0031490">
    <property type="term" value="F:chromatin DNA binding"/>
    <property type="evidence" value="ECO:0000266"/>
    <property type="project" value="RGD"/>
</dbReference>
<dbReference type="GO" id="GO:0003677">
    <property type="term" value="F:DNA binding"/>
    <property type="evidence" value="ECO:0000266"/>
    <property type="project" value="RGD"/>
</dbReference>
<dbReference type="GO" id="GO:0001228">
    <property type="term" value="F:DNA-binding transcription activator activity, RNA polymerase II-specific"/>
    <property type="evidence" value="ECO:0000250"/>
    <property type="project" value="UniProtKB"/>
</dbReference>
<dbReference type="GO" id="GO:0003700">
    <property type="term" value="F:DNA-binding transcription factor activity"/>
    <property type="evidence" value="ECO:0000314"/>
    <property type="project" value="RGD"/>
</dbReference>
<dbReference type="GO" id="GO:0000981">
    <property type="term" value="F:DNA-binding transcription factor activity, RNA polymerase II-specific"/>
    <property type="evidence" value="ECO:0000318"/>
    <property type="project" value="GO_Central"/>
</dbReference>
<dbReference type="GO" id="GO:0001227">
    <property type="term" value="F:DNA-binding transcription repressor activity, RNA polymerase II-specific"/>
    <property type="evidence" value="ECO:0000266"/>
    <property type="project" value="RGD"/>
</dbReference>
<dbReference type="GO" id="GO:0003676">
    <property type="term" value="F:nucleic acid binding"/>
    <property type="evidence" value="ECO:0000266"/>
    <property type="project" value="RGD"/>
</dbReference>
<dbReference type="GO" id="GO:1990841">
    <property type="term" value="F:promoter-specific chromatin binding"/>
    <property type="evidence" value="ECO:0000266"/>
    <property type="project" value="RGD"/>
</dbReference>
<dbReference type="GO" id="GO:0051721">
    <property type="term" value="F:protein phosphatase 2A binding"/>
    <property type="evidence" value="ECO:0000250"/>
    <property type="project" value="UniProtKB"/>
</dbReference>
<dbReference type="GO" id="GO:0000978">
    <property type="term" value="F:RNA polymerase II cis-regulatory region sequence-specific DNA binding"/>
    <property type="evidence" value="ECO:0000266"/>
    <property type="project" value="RGD"/>
</dbReference>
<dbReference type="GO" id="GO:0043565">
    <property type="term" value="F:sequence-specific DNA binding"/>
    <property type="evidence" value="ECO:0000314"/>
    <property type="project" value="RGD"/>
</dbReference>
<dbReference type="GO" id="GO:0001223">
    <property type="term" value="F:transcription coactivator binding"/>
    <property type="evidence" value="ECO:0000353"/>
    <property type="project" value="RGD"/>
</dbReference>
<dbReference type="GO" id="GO:0031625">
    <property type="term" value="F:ubiquitin protein ligase binding"/>
    <property type="evidence" value="ECO:0000266"/>
    <property type="project" value="RGD"/>
</dbReference>
<dbReference type="GO" id="GO:0006915">
    <property type="term" value="P:apoptotic process"/>
    <property type="evidence" value="ECO:0000250"/>
    <property type="project" value="UniProtKB"/>
</dbReference>
<dbReference type="GO" id="GO:0006914">
    <property type="term" value="P:autophagy"/>
    <property type="evidence" value="ECO:0007669"/>
    <property type="project" value="UniProtKB-KW"/>
</dbReference>
<dbReference type="GO" id="GO:0001568">
    <property type="term" value="P:blood vessel development"/>
    <property type="evidence" value="ECO:0000266"/>
    <property type="project" value="RGD"/>
</dbReference>
<dbReference type="GO" id="GO:0060070">
    <property type="term" value="P:canonical Wnt signaling pathway"/>
    <property type="evidence" value="ECO:0000266"/>
    <property type="project" value="RGD"/>
</dbReference>
<dbReference type="GO" id="GO:0030154">
    <property type="term" value="P:cell differentiation"/>
    <property type="evidence" value="ECO:0007669"/>
    <property type="project" value="UniProtKB-KW"/>
</dbReference>
<dbReference type="GO" id="GO:0071549">
    <property type="term" value="P:cellular response to dexamethasone stimulus"/>
    <property type="evidence" value="ECO:0000270"/>
    <property type="project" value="RGD"/>
</dbReference>
<dbReference type="GO" id="GO:0070301">
    <property type="term" value="P:cellular response to hydrogen peroxide"/>
    <property type="evidence" value="ECO:0000270"/>
    <property type="project" value="RGD"/>
</dbReference>
<dbReference type="GO" id="GO:0071455">
    <property type="term" value="P:cellular response to hyperoxia"/>
    <property type="evidence" value="ECO:0000250"/>
    <property type="project" value="UniProtKB"/>
</dbReference>
<dbReference type="GO" id="GO:0032869">
    <property type="term" value="P:cellular response to insulin stimulus"/>
    <property type="evidence" value="ECO:0000250"/>
    <property type="project" value="UniProtKB"/>
</dbReference>
<dbReference type="GO" id="GO:0071732">
    <property type="term" value="P:cellular response to nitric oxide"/>
    <property type="evidence" value="ECO:0000250"/>
    <property type="project" value="UniProtKB"/>
</dbReference>
<dbReference type="GO" id="GO:0034599">
    <property type="term" value="P:cellular response to oxidative stress"/>
    <property type="evidence" value="ECO:0000250"/>
    <property type="project" value="UniProtKB"/>
</dbReference>
<dbReference type="GO" id="GO:0009267">
    <property type="term" value="P:cellular response to starvation"/>
    <property type="evidence" value="ECO:0000250"/>
    <property type="project" value="UniProtKB"/>
</dbReference>
<dbReference type="GO" id="GO:0006974">
    <property type="term" value="P:DNA damage response"/>
    <property type="evidence" value="ECO:0000250"/>
    <property type="project" value="UniProtKB"/>
</dbReference>
<dbReference type="GO" id="GO:0070166">
    <property type="term" value="P:enamel mineralization"/>
    <property type="evidence" value="ECO:0000270"/>
    <property type="project" value="RGD"/>
</dbReference>
<dbReference type="GO" id="GO:0010467">
    <property type="term" value="P:gene expression"/>
    <property type="evidence" value="ECO:0000266"/>
    <property type="project" value="RGD"/>
</dbReference>
<dbReference type="GO" id="GO:0042593">
    <property type="term" value="P:glucose homeostasis"/>
    <property type="evidence" value="ECO:0000266"/>
    <property type="project" value="RGD"/>
</dbReference>
<dbReference type="GO" id="GO:0008286">
    <property type="term" value="P:insulin receptor signaling pathway"/>
    <property type="evidence" value="ECO:0000266"/>
    <property type="project" value="RGD"/>
</dbReference>
<dbReference type="GO" id="GO:0043066">
    <property type="term" value="P:negative regulation of apoptotic process"/>
    <property type="evidence" value="ECO:0000266"/>
    <property type="project" value="RGD"/>
</dbReference>
<dbReference type="GO" id="GO:0090090">
    <property type="term" value="P:negative regulation of canonical Wnt signaling pathway"/>
    <property type="evidence" value="ECO:0000266"/>
    <property type="project" value="RGD"/>
</dbReference>
<dbReference type="GO" id="GO:1903243">
    <property type="term" value="P:negative regulation of cardiac muscle hypertrophy in response to stress"/>
    <property type="evidence" value="ECO:0000315"/>
    <property type="project" value="UniProtKB"/>
</dbReference>
<dbReference type="GO" id="GO:0045599">
    <property type="term" value="P:negative regulation of fat cell differentiation"/>
    <property type="evidence" value="ECO:0000250"/>
    <property type="project" value="UniProtKB"/>
</dbReference>
<dbReference type="GO" id="GO:0010629">
    <property type="term" value="P:negative regulation of gene expression"/>
    <property type="evidence" value="ECO:0000266"/>
    <property type="project" value="RGD"/>
</dbReference>
<dbReference type="GO" id="GO:0046676">
    <property type="term" value="P:negative regulation of insulin secretion"/>
    <property type="evidence" value="ECO:0000250"/>
    <property type="project" value="UniProtKB"/>
</dbReference>
<dbReference type="GO" id="GO:0032873">
    <property type="term" value="P:negative regulation of stress-activated MAPK cascade"/>
    <property type="evidence" value="ECO:0000266"/>
    <property type="project" value="RGD"/>
</dbReference>
<dbReference type="GO" id="GO:0097150">
    <property type="term" value="P:neuronal stem cell population maintenance"/>
    <property type="evidence" value="ECO:0000266"/>
    <property type="project" value="RGD"/>
</dbReference>
<dbReference type="GO" id="GO:0043065">
    <property type="term" value="P:positive regulation of apoptotic process"/>
    <property type="evidence" value="ECO:0000250"/>
    <property type="project" value="UniProtKB"/>
</dbReference>
<dbReference type="GO" id="GO:0010508">
    <property type="term" value="P:positive regulation of autophagy"/>
    <property type="evidence" value="ECO:0000250"/>
    <property type="project" value="UniProtKB"/>
</dbReference>
<dbReference type="GO" id="GO:1903661">
    <property type="term" value="P:positive regulation of complement-dependent cytotoxicity"/>
    <property type="evidence" value="ECO:0000266"/>
    <property type="project" value="RGD"/>
</dbReference>
<dbReference type="GO" id="GO:0045893">
    <property type="term" value="P:positive regulation of DNA-templated transcription"/>
    <property type="evidence" value="ECO:0000314"/>
    <property type="project" value="RGD"/>
</dbReference>
<dbReference type="GO" id="GO:0045722">
    <property type="term" value="P:positive regulation of gluconeogenesis"/>
    <property type="evidence" value="ECO:0000250"/>
    <property type="project" value="UniProtKB"/>
</dbReference>
<dbReference type="GO" id="GO:0045732">
    <property type="term" value="P:positive regulation of protein catabolic process"/>
    <property type="evidence" value="ECO:0000250"/>
    <property type="project" value="UniProtKB"/>
</dbReference>
<dbReference type="GO" id="GO:0034393">
    <property type="term" value="P:positive regulation of smooth muscle cell apoptotic process"/>
    <property type="evidence" value="ECO:0000315"/>
    <property type="project" value="UniProtKB"/>
</dbReference>
<dbReference type="GO" id="GO:0045944">
    <property type="term" value="P:positive regulation of transcription by RNA polymerase II"/>
    <property type="evidence" value="ECO:0000266"/>
    <property type="project" value="RGD"/>
</dbReference>
<dbReference type="GO" id="GO:0042127">
    <property type="term" value="P:regulation of cell population proliferation"/>
    <property type="evidence" value="ECO:0000266"/>
    <property type="project" value="RGD"/>
</dbReference>
<dbReference type="GO" id="GO:0006355">
    <property type="term" value="P:regulation of DNA-templated transcription"/>
    <property type="evidence" value="ECO:0000266"/>
    <property type="project" value="RGD"/>
</dbReference>
<dbReference type="GO" id="GO:0006111">
    <property type="term" value="P:regulation of gluconeogenesis"/>
    <property type="evidence" value="ECO:0000266"/>
    <property type="project" value="RGD"/>
</dbReference>
<dbReference type="GO" id="GO:2000177">
    <property type="term" value="P:regulation of neural precursor cell proliferation"/>
    <property type="evidence" value="ECO:0000266"/>
    <property type="project" value="RGD"/>
</dbReference>
<dbReference type="GO" id="GO:2000377">
    <property type="term" value="P:regulation of reactive oxygen species metabolic process"/>
    <property type="evidence" value="ECO:0000266"/>
    <property type="project" value="RGD"/>
</dbReference>
<dbReference type="GO" id="GO:0006357">
    <property type="term" value="P:regulation of transcription by RNA polymerase II"/>
    <property type="evidence" value="ECO:0000314"/>
    <property type="project" value="RGD"/>
</dbReference>
<dbReference type="GO" id="GO:0060260">
    <property type="term" value="P:regulation of transcription initiation by RNA polymerase II"/>
    <property type="evidence" value="ECO:0000315"/>
    <property type="project" value="UniProtKB"/>
</dbReference>
<dbReference type="GO" id="GO:0070542">
    <property type="term" value="P:response to fatty acid"/>
    <property type="evidence" value="ECO:0000250"/>
    <property type="project" value="UniProtKB"/>
</dbReference>
<dbReference type="GO" id="GO:1902617">
    <property type="term" value="P:response to fluoride"/>
    <property type="evidence" value="ECO:0000270"/>
    <property type="project" value="RGD"/>
</dbReference>
<dbReference type="GO" id="GO:0032868">
    <property type="term" value="P:response to insulin"/>
    <property type="evidence" value="ECO:0000270"/>
    <property type="project" value="RGD"/>
</dbReference>
<dbReference type="CDD" id="cd20060">
    <property type="entry name" value="FH_FOXO1"/>
    <property type="match status" value="1"/>
</dbReference>
<dbReference type="FunFam" id="1.10.10.10:FF:000032">
    <property type="entry name" value="Forkhead box protein O4"/>
    <property type="match status" value="1"/>
</dbReference>
<dbReference type="Gene3D" id="1.10.10.10">
    <property type="entry name" value="Winged helix-like DNA-binding domain superfamily/Winged helix DNA-binding domain"/>
    <property type="match status" value="1"/>
</dbReference>
<dbReference type="InterPro" id="IPR047408">
    <property type="entry name" value="FH_FOXO1"/>
</dbReference>
<dbReference type="InterPro" id="IPR001766">
    <property type="entry name" value="Fork_head_dom"/>
</dbReference>
<dbReference type="InterPro" id="IPR032067">
    <property type="entry name" value="FOXO-TAD"/>
</dbReference>
<dbReference type="InterPro" id="IPR032068">
    <property type="entry name" value="FOXO_KIX-bd"/>
</dbReference>
<dbReference type="InterPro" id="IPR030456">
    <property type="entry name" value="TF_fork_head_CS_2"/>
</dbReference>
<dbReference type="InterPro" id="IPR036388">
    <property type="entry name" value="WH-like_DNA-bd_sf"/>
</dbReference>
<dbReference type="InterPro" id="IPR036390">
    <property type="entry name" value="WH_DNA-bd_sf"/>
</dbReference>
<dbReference type="PANTHER" id="PTHR45767">
    <property type="entry name" value="FORKHEAD BOX PROTEIN O"/>
    <property type="match status" value="1"/>
</dbReference>
<dbReference type="PANTHER" id="PTHR45767:SF1">
    <property type="entry name" value="FORKHEAD BOX PROTEIN O1"/>
    <property type="match status" value="1"/>
</dbReference>
<dbReference type="Pfam" id="PF00250">
    <property type="entry name" value="Forkhead"/>
    <property type="match status" value="1"/>
</dbReference>
<dbReference type="Pfam" id="PF16676">
    <property type="entry name" value="FOXO-TAD"/>
    <property type="match status" value="1"/>
</dbReference>
<dbReference type="Pfam" id="PF16675">
    <property type="entry name" value="FOXO_KIX_bdg"/>
    <property type="match status" value="1"/>
</dbReference>
<dbReference type="PRINTS" id="PR00053">
    <property type="entry name" value="FORKHEAD"/>
</dbReference>
<dbReference type="SMART" id="SM00339">
    <property type="entry name" value="FH"/>
    <property type="match status" value="1"/>
</dbReference>
<dbReference type="SUPFAM" id="SSF46785">
    <property type="entry name" value="Winged helix' DNA-binding domain"/>
    <property type="match status" value="1"/>
</dbReference>
<dbReference type="PROSITE" id="PS00658">
    <property type="entry name" value="FORK_HEAD_2"/>
    <property type="match status" value="1"/>
</dbReference>
<dbReference type="PROSITE" id="PS50039">
    <property type="entry name" value="FORK_HEAD_3"/>
    <property type="match status" value="1"/>
</dbReference>
<name>FOXO1_RAT</name>
<comment type="function">
    <text evidence="2 3 6 7">Transcription factor that is the main target of insulin signaling and regulates metabolic homeostasis in response to oxidative stress (By similarity). Binds to the insulin response element (IRE) with consensus sequence 5'-TT[G/A]TTTTG-3' and the related Daf-16 family binding element (DBE) with consensus sequence 5'-TT[G/A]TTTAC-3'. Activity suppressed by insulin (By similarity). Main regulator of redox balance and osteoblast numbers and controls bone mass (By similarity). Orchestrates the endocrine function of the skeleton in regulating glucose metabolism (By similarity). Also acts as a key regulator of chondrogenic commitment of skeletal progenitor cells in response to lipid availability: when lipids levels are low, translocates to the nucleus and promotes expression of SOX9, which induces chondrogenic commitment and suppresses fatty acid oxidation (By similarity). Acts synergistically with ATF4 to suppress osteocalcin/BGLAP activity, increasing glucose levels and triggering glucose intolerance and insulin insensitivity (By similarity). Also suppresses the transcriptional activity of RUNX2, an upstream activator of osteocalcin/BGLAP (By similarity). Acts as an inhibitor of glucose sensing in pancreatic beta cells by acting as a transcription repressor and suppressing expression of PDX1 (By similarity). In hepatocytes, promotes gluconeogenesis by acting together with PPARGC1A and CEBPA to activate the expression of genes such as IGFBP1, G6PC1 and PCK1 (By similarity). Also promotes gluconeogenesis by directly promoting expression of PPARGC1A and G6PC1 (By similarity). Important regulator of cell death acting downstream of CDK1, PKB/AKT1 and STK4/MST1 (By similarity). Promotes neural cell death (By similarity). Mediates insulin action on adipose tissue (By similarity). Regulates the expression of adipogenic genes such as PPARG during preadipocyte differentiation and, adipocyte size and adipose tissue-specific gene expression in response to excessive calorie intake (By similarity). Regulates the transcriptional activity of GADD45A and repair of nitric oxide-damaged DNA in beta-cells (By similarity). Required for the autophagic cell death induction in response to starvation or oxidative stress in a transcription-independent manner (By similarity). Mediates the function of MLIP in cardiomyocytes hypertrophy and cardiac remodeling (PubMed:26436652). Positive regulator of apoptosis in cardiac smooth muscle cells as a result of its transcriptional activation of pro-apoptotic genes (PubMed:19483080). Regulates endothelial cell (EC) viability and apoptosis in a PPIA/CYPA-dependent manner via transcription of CCL2 and BCL2L11 which are involved in EC chemotaxis and apoptosis (By similarity).</text>
</comment>
<comment type="subunit">
    <text evidence="2 3">Interacts with LRPPRC. Interacts with RUNX2; the interaction inhibits RUNX2 transcriptional activity and mediates the IGF1/insulin-dependent BGLAP expression in osteoblasts Interacts with PPP2R1A; the interaction regulates the dephosphorylation of FOXO1 at Thr-24 and Ser-250 leading to its nuclear import. Interacts with NLK. Interacts with SIRT1; the interaction results in the deacetylation of FOXO1 leading to activation of FOXO1-mediated transcription of genes involved in DNA repair and stress resistance. Binds to CDK1. Interacts with the 14-3-3 proteins, YWHAG and YWHAZ; the interactions require insulin-stimulated phosphorylation on Thr-24, promote nuclear exit and loss of transcriptional activity. Interacts with SKP2; the interaction ubiquitinates FOXO1 leading to its proteasomal degradation. The interaction requires the presence of KRIT1. Interacts (via the C-terminal half) with ATF4 (via its DNA binding domain); the interaction occurs in osteoblasts, regulates glucose homeostasis via suppression of beta-cell proliferation and subsequent decrease in insulin production. Interacts with PRMT1; the interaction methylates FOXO1, prevents PKB/AKT1 phosphorylation and retains FOXO1 in the nucleus. Interacts with EP300 and CREBBP; the interactions acetylate FOXO1. Interacts with SIRT2; the interaction is disrupted in response to oxidative stress or serum deprivation, leading to increased level of acetylated FOXO1, which promotes stress-induced autophagy by stimulating E1-like activating enzyme ATG7. Interacts (acetylated form) with ATG7; the interaction is increased in response to oxidative stress or serum deprivation and promotes the autophagic process leading to cell death. Interacts (acetylated form) with PPARG. Interacts with XBP1; this interaction is direct and leads to FOXO1 ubiquitination and degradation via the proteasome pathway (By similarity). Interacts (via the Fork-head domain) with CEBPA; the interaction increases when FOXO1 is deacetylated. Interacts with WDFY2. Forms a complex with WDFY2 and AKT1 (By similarity). Interacts with CRY1 (By similarity). Interacts with PPIA/CYPA; the interaction promotes FOXO1 dephosphorylation, nuclear accumulation and transcriptional activity (By similarity). Interacts with TOX4; FOXO1 is required for full induction of TOX4-dependent activity and the interaction is inhibited by insulin (By similarity). Interacts (when phosphorylated on Ser-250) with STUB1/CHIP (By similarity).</text>
</comment>
<comment type="subcellular location">
    <subcellularLocation>
        <location evidence="6">Cytoplasm</location>
    </subcellularLocation>
    <subcellularLocation>
        <location evidence="3">Nucleus</location>
    </subcellularLocation>
    <text evidence="2 3">Shuttles between the cytoplasm and nucleus (By similarity). Largely nuclear in unstimulated cells (By similarity). In osteoblasts, colocalizes with ATF4 and RUNX2 in the nucleus. Serum deprivation increases localization to the nucleus, leading to activate expression of SOX9 and subsequent chondrogenesis (By similarity). Insulin-induced phosphorylation at Ser-253 by PKB/AKT1 leads, via stimulation of Thr-24 phosphorylation, to binding of 14-3-3 proteins and nuclear export to the cytoplasm where it is degraded by the ubiquitin-proteasomal pathway (By similarity). Phosphorylation at Ser-249 by CDK1 disrupts binding of 14-3-3 proteins and promotes nuclear accumulation (By similarity). Phosphorylation by NLK results in nuclear export (By similarity). Translocates to the nucleus upon oxidative stress-induced phosphorylation at Ser-212 by STK4/MST1 (By similarity). SGK1-mediated phosphorylation also results in nuclear translocation. Retained in the nucleus under stress stimuli including oxidative stress, nutrient deprivation or nitric oxide. Methylated form is nuclear (By similarity). PPIA/CYPA stimulates its nuclear accumulation (By similarity). Deacetylation by SIRT6, promotes its translocation into the cytoplasm (By similarity).</text>
</comment>
<comment type="tissue specificity">
    <text evidence="6">Expressed in the internal elastic lamina of the carotid artery (at protein level).</text>
</comment>
<comment type="developmental stage">
    <text evidence="6">Expressed in neonatal cardiomyocytes (at protein level).</text>
</comment>
<comment type="induction">
    <text evidence="6">Down-regulated in the neointimal layer of the carotid artery by blood flow cessation injury.</text>
</comment>
<comment type="PTM">
    <text evidence="2 3 6">Phosphorylation by NLK promotes nuclear export and inhibits the transcriptional activity. In response to growth factors, phosphorylation on Thr-24, Ser-250 and Ser-313 by PKB/AKT1 promotes nuclear export and inactivation of transactivational activity (PubMed:19483080). Phosphorylation on Thr-24 is required for binding 14-3-3 proteins. Phosphorylation of Ser-250 decreases DNA-binding activity and promotes the phosphorylation of Thr-24 and Ser-313, permitting phosphorylation of Ser-316 and Ser-319, probably by CDK1, leading to nuclear exclusion and loss of function. Stress signals, such as response to oxygen or nitric oxide, attenuate the PKB/AKT1-mediated phosphorylation leading to nuclear retention. Phosphorylation of Ser-323 is independent of IGF1 and leads to reduced function. Dephosphorylated on Thr-24 and Ser-250 by PP2A in beta-cells under oxidative stress leading to nuclear retention. Phosphorylation of Ser-243 by CDK1 disrupts binding of 14-3-3 proteins leading to nuclear accumulation and has no effect on DNA binding nor transcriptional activity. Phosphorylation by STK4/MST1 on Ser-206, upon oxidative stress, inhibits binding to 14-3-3 proteins and nuclear export (By similarity). PPIA/CYPA promotes its dephosphorylation on Ser-250 (By similarity).</text>
</comment>
<comment type="PTM">
    <text evidence="2 3">Ubiquitinated by SKP2 (By similarity). Ubiquitination leads to proteasomal degradation (By similarity). Ubiquitinated by STUB1/CHIP; when Ser-250 is phosphorylated (By similarity).</text>
</comment>
<comment type="PTM">
    <text evidence="3">Methylation inhibits AKT1-mediated phosphorylation at Ser-250 and is increased by oxidative stress.</text>
</comment>
<comment type="PTM">
    <text evidence="2">Acetylated. Acetylation at Lys-256 and Lys-268 are necessary for autophagic cell death induction. Deacetylated by SIRT2 in response to oxidative stress or serum deprivation, thereby negatively regulating FOXO1-mediated autophagic cell death. Once in the nucleus, acetylated by CREBBP/EP300. Acetylation diminishes the interaction with target DNA and attenuates the transcriptional activity. It increases the phosphorylation at Ser-250. Deacetylation by SIRT1 results in reactivation of the transcriptional activity. Oxidative stress by hydrogen peroxide treatment appears to promote deacetylation and uncoupling of insulin-induced phosphorylation. By contrast, resveratrol acts independently of acetylation. Acetylated at Lys-417, promoting its localization to the nucleus and transcription factor activity. Deacetylation at Lys-417 by SIRT6, promotes its translocation into the cytoplasm, preventing its transcription factor activity. Deacetylation and subsequent inhibition by SIRT6 has different effects depending on cell types: it inhibits gluconeogenesis in hepatocytes, promotes glucose sensing in pancreatic beta-cells and regulates lipid catabolism in brown adipocytes.</text>
</comment>
<evidence type="ECO:0000250" key="1"/>
<evidence type="ECO:0000250" key="2">
    <source>
        <dbReference type="UniProtKB" id="Q12778"/>
    </source>
</evidence>
<evidence type="ECO:0000250" key="3">
    <source>
        <dbReference type="UniProtKB" id="Q9R1E0"/>
    </source>
</evidence>
<evidence type="ECO:0000255" key="4">
    <source>
        <dbReference type="PROSITE-ProRule" id="PRU00089"/>
    </source>
</evidence>
<evidence type="ECO:0000256" key="5">
    <source>
        <dbReference type="SAM" id="MobiDB-lite"/>
    </source>
</evidence>
<evidence type="ECO:0000269" key="6">
    <source>
    </source>
</evidence>
<evidence type="ECO:0000269" key="7">
    <source>
    </source>
</evidence>
<evidence type="ECO:0007744" key="8">
    <source>
    </source>
</evidence>
<proteinExistence type="evidence at protein level"/>
<keyword id="KW-0007">Acetylation</keyword>
<keyword id="KW-0010">Activator</keyword>
<keyword id="KW-0053">Apoptosis</keyword>
<keyword id="KW-0072">Autophagy</keyword>
<keyword id="KW-0963">Cytoplasm</keyword>
<keyword id="KW-0221">Differentiation</keyword>
<keyword id="KW-0238">DNA-binding</keyword>
<keyword id="KW-0488">Methylation</keyword>
<keyword id="KW-0539">Nucleus</keyword>
<keyword id="KW-0597">Phosphoprotein</keyword>
<keyword id="KW-1185">Reference proteome</keyword>
<keyword id="KW-0804">Transcription</keyword>
<keyword id="KW-0805">Transcription regulation</keyword>
<keyword id="KW-0832">Ubl conjugation</keyword>
<gene>
    <name type="primary">Foxo1</name>
    <name type="synonym">Foxo1a</name>
</gene>